<organism>
    <name type="scientific">Saccharomyces cerevisiae (strain ATCC 204508 / S288c)</name>
    <name type="common">Baker's yeast</name>
    <dbReference type="NCBI Taxonomy" id="559292"/>
    <lineage>
        <taxon>Eukaryota</taxon>
        <taxon>Fungi</taxon>
        <taxon>Dikarya</taxon>
        <taxon>Ascomycota</taxon>
        <taxon>Saccharomycotina</taxon>
        <taxon>Saccharomycetes</taxon>
        <taxon>Saccharomycetales</taxon>
        <taxon>Saccharomycetaceae</taxon>
        <taxon>Saccharomyces</taxon>
    </lineage>
</organism>
<protein>
    <recommendedName>
        <fullName>Chromatin structure-remodeling complex subunit RSC1</fullName>
    </recommendedName>
    <alternativeName>
        <fullName>RSC complex subunit RSC1</fullName>
    </alternativeName>
    <alternativeName>
        <fullName>Remodel the structure of chromatin complex subunit 1</fullName>
    </alternativeName>
</protein>
<reference key="1">
    <citation type="journal article" date="2005" name="Nat. Genet.">
        <title>Quantitative trait loci mapped to single-nucleotide resolution in yeast.</title>
        <authorList>
            <person name="Deutschbauer A.M."/>
            <person name="Davis R.W."/>
        </authorList>
    </citation>
    <scope>NUCLEOTIDE SEQUENCE [GENOMIC DNA]</scope>
    <source>
        <strain>SK1</strain>
    </source>
</reference>
<reference key="2">
    <citation type="journal article" date="1997" name="Nature">
        <title>The nucleotide sequence of Saccharomyces cerevisiae chromosome VII.</title>
        <authorList>
            <person name="Tettelin H."/>
            <person name="Agostoni-Carbone M.L."/>
            <person name="Albermann K."/>
            <person name="Albers M."/>
            <person name="Arroyo J."/>
            <person name="Backes U."/>
            <person name="Barreiros T."/>
            <person name="Bertani I."/>
            <person name="Bjourson A.J."/>
            <person name="Brueckner M."/>
            <person name="Bruschi C.V."/>
            <person name="Carignani G."/>
            <person name="Castagnoli L."/>
            <person name="Cerdan E."/>
            <person name="Clemente M.L."/>
            <person name="Coblenz A."/>
            <person name="Coglievina M."/>
            <person name="Coissac E."/>
            <person name="Defoor E."/>
            <person name="Del Bino S."/>
            <person name="Delius H."/>
            <person name="Delneri D."/>
            <person name="de Wergifosse P."/>
            <person name="Dujon B."/>
            <person name="Durand P."/>
            <person name="Entian K.-D."/>
            <person name="Eraso P."/>
            <person name="Escribano V."/>
            <person name="Fabiani L."/>
            <person name="Fartmann B."/>
            <person name="Feroli F."/>
            <person name="Feuermann M."/>
            <person name="Frontali L."/>
            <person name="Garcia-Gonzalez M."/>
            <person name="Garcia-Saez M.I."/>
            <person name="Goffeau A."/>
            <person name="Guerreiro P."/>
            <person name="Hani J."/>
            <person name="Hansen M."/>
            <person name="Hebling U."/>
            <person name="Hernandez K."/>
            <person name="Heumann K."/>
            <person name="Hilger F."/>
            <person name="Hofmann B."/>
            <person name="Indge K.J."/>
            <person name="James C.M."/>
            <person name="Klima R."/>
            <person name="Koetter P."/>
            <person name="Kramer B."/>
            <person name="Kramer W."/>
            <person name="Lauquin G."/>
            <person name="Leuther H."/>
            <person name="Louis E.J."/>
            <person name="Maillier E."/>
            <person name="Marconi A."/>
            <person name="Martegani E."/>
            <person name="Mazon M.J."/>
            <person name="Mazzoni C."/>
            <person name="McReynolds A.D.K."/>
            <person name="Melchioretto P."/>
            <person name="Mewes H.-W."/>
            <person name="Minenkova O."/>
            <person name="Mueller-Auer S."/>
            <person name="Nawrocki A."/>
            <person name="Netter P."/>
            <person name="Neu R."/>
            <person name="Nombela C."/>
            <person name="Oliver S.G."/>
            <person name="Panzeri L."/>
            <person name="Paoluzi S."/>
            <person name="Plevani P."/>
            <person name="Portetelle D."/>
            <person name="Portillo F."/>
            <person name="Potier S."/>
            <person name="Purnelle B."/>
            <person name="Rieger M."/>
            <person name="Riles L."/>
            <person name="Rinaldi T."/>
            <person name="Robben J."/>
            <person name="Rodrigues-Pousada C."/>
            <person name="Rodriguez-Belmonte E."/>
            <person name="Rodriguez-Torres A.M."/>
            <person name="Rose M."/>
            <person name="Ruzzi M."/>
            <person name="Saliola M."/>
            <person name="Sanchez-Perez M."/>
            <person name="Schaefer B."/>
            <person name="Schaefer M."/>
            <person name="Scharfe M."/>
            <person name="Schmidheini T."/>
            <person name="Schreer A."/>
            <person name="Skala J."/>
            <person name="Souciet J.-L."/>
            <person name="Steensma H.Y."/>
            <person name="Talla E."/>
            <person name="Thierry A."/>
            <person name="Vandenbol M."/>
            <person name="van der Aart Q.J.M."/>
            <person name="Van Dyck L."/>
            <person name="Vanoni M."/>
            <person name="Verhasselt P."/>
            <person name="Voet M."/>
            <person name="Volckaert G."/>
            <person name="Wambutt R."/>
            <person name="Watson M.D."/>
            <person name="Weber N."/>
            <person name="Wedler E."/>
            <person name="Wedler H."/>
            <person name="Wipfli P."/>
            <person name="Wolf K."/>
            <person name="Wright L.F."/>
            <person name="Zaccaria P."/>
            <person name="Zimmermann M."/>
            <person name="Zollner A."/>
            <person name="Kleine K."/>
        </authorList>
    </citation>
    <scope>NUCLEOTIDE SEQUENCE [LARGE SCALE GENOMIC DNA]</scope>
    <source>
        <strain>ATCC 204508 / S288c</strain>
    </source>
</reference>
<reference key="3">
    <citation type="journal article" date="2014" name="G3 (Bethesda)">
        <title>The reference genome sequence of Saccharomyces cerevisiae: Then and now.</title>
        <authorList>
            <person name="Engel S.R."/>
            <person name="Dietrich F.S."/>
            <person name="Fisk D.G."/>
            <person name="Binkley G."/>
            <person name="Balakrishnan R."/>
            <person name="Costanzo M.C."/>
            <person name="Dwight S.S."/>
            <person name="Hitz B.C."/>
            <person name="Karra K."/>
            <person name="Nash R.S."/>
            <person name="Weng S."/>
            <person name="Wong E.D."/>
            <person name="Lloyd P."/>
            <person name="Skrzypek M.S."/>
            <person name="Miyasato S.R."/>
            <person name="Simison M."/>
            <person name="Cherry J.M."/>
        </authorList>
    </citation>
    <scope>GENOME REANNOTATION</scope>
    <source>
        <strain>ATCC 204508 / S288c</strain>
    </source>
</reference>
<reference key="4">
    <citation type="journal article" date="1999" name="Mol. Cell">
        <title>Two functionally distinct forms of the RSC nucleosome-remodeling complex, containing essential AT hook, BAH, and bromodomains.</title>
        <authorList>
            <person name="Cairns B.R."/>
            <person name="Schlichter A."/>
            <person name="Erdjument-Bromage H."/>
            <person name="Tempst P."/>
            <person name="Kornberg R.D."/>
            <person name="Winston F."/>
        </authorList>
    </citation>
    <scope>PROTEIN SEQUENCE OF 511-526 AND 759-776</scope>
    <scope>COMPOSITION OF THE RSC COMPLEX</scope>
    <scope>MUTAGENESIS OF 228-GLY--PRO-230</scope>
</reference>
<reference key="5">
    <citation type="journal article" date="1996" name="Cell">
        <title>RSC, an essential, abundant chromatin-remodeling complex.</title>
        <authorList>
            <person name="Cairns B.R."/>
            <person name="Lorch Y."/>
            <person name="Li Y."/>
            <person name="Zhang M."/>
            <person name="Lacomis L."/>
            <person name="Erdjument-Bromage H."/>
            <person name="Tempst P."/>
            <person name="Du J."/>
            <person name="Laurent B.C."/>
            <person name="Kornberg R.D."/>
        </authorList>
    </citation>
    <scope>FUNCTION OF THE RSC COMPLEX</scope>
    <scope>COMPOSITION OF THE RSC COMPLEX</scope>
</reference>
<reference key="6">
    <citation type="journal article" date="1999" name="Cell">
        <title>Histone octamer transfer by a chromatin-remodeling complex.</title>
        <authorList>
            <person name="Lorch Y."/>
            <person name="Zhang M."/>
            <person name="Kornberg R.D."/>
        </authorList>
    </citation>
    <scope>FUNCTION OF THE RSC COMPLEX</scope>
</reference>
<reference key="7">
    <citation type="journal article" date="1999" name="EMBO J.">
        <title>Transcriptional repression of the yeast CHA1 gene requires the chromatin-remodeling complex RSC.</title>
        <authorList>
            <person name="Moreira J.M.A."/>
            <person name="Holmberg S."/>
        </authorList>
    </citation>
    <scope>FUNCTION OF THE RSC COMPLEX</scope>
</reference>
<reference key="8">
    <citation type="journal article" date="2002" name="FEMS Yeast Res.">
        <title>Functional differences between RSC1 and RSC2, components of a for growth essential chromatin-remodeling complex of Saccharomyces cerevisiae, during the sporulation process.</title>
        <authorList>
            <person name="Yukawa M."/>
            <person name="Koyama H."/>
            <person name="Miyahara K."/>
            <person name="Tsuchiya E."/>
        </authorList>
    </citation>
    <scope>FUNCTION</scope>
</reference>
<reference key="9">
    <citation type="journal article" date="2002" name="Genes Dev.">
        <title>Chromatin remodeling by RSC involves ATP-dependent DNA translocation.</title>
        <authorList>
            <person name="Saha A."/>
            <person name="Wittmeyer J."/>
            <person name="Cairns B.R."/>
        </authorList>
    </citation>
    <scope>FUNCTION OF THE RSC COMPLEX</scope>
</reference>
<reference key="10">
    <citation type="journal article" date="2002" name="Genetics">
        <title>Yeast RSC function is required for organization of the cellular cytoskeleton via an alternative PKC1 pathway.</title>
        <authorList>
            <person name="Chai B."/>
            <person name="Hsu J.-M."/>
            <person name="Du J."/>
            <person name="Laurent B.C."/>
        </authorList>
    </citation>
    <scope>FUNCTION OF THE RSC COMPLEX</scope>
</reference>
<reference key="11">
    <citation type="journal article" date="2003" name="Mol. Cell. Biol.">
        <title>The yeast RSC chromatin-remodeling complex is required for kinetochore function in chromosome segregation.</title>
        <authorList>
            <person name="Hsu J.-M."/>
            <person name="Huang J."/>
            <person name="Meluh P.B."/>
            <person name="Laurent B.C."/>
        </authorList>
    </citation>
    <scope>FUNCTION OF THE RSC COMPLEX</scope>
    <scope>SUBCELLULAR LOCATION</scope>
    <scope>INTERACTION OF THE RSC COMPLEX WITH HISTONES</scope>
</reference>
<reference key="12">
    <citation type="journal article" date="2003" name="Nature">
        <title>Global analysis of protein expression in yeast.</title>
        <authorList>
            <person name="Ghaemmaghami S."/>
            <person name="Huh W.-K."/>
            <person name="Bower K."/>
            <person name="Howson R.W."/>
            <person name="Belle A."/>
            <person name="Dephoure N."/>
            <person name="O'Shea E.K."/>
            <person name="Weissman J.S."/>
        </authorList>
    </citation>
    <scope>LEVEL OF PROTEIN EXPRESSION [LARGE SCALE ANALYSIS]</scope>
</reference>
<reference key="13">
    <citation type="journal article" date="2008" name="Mol. Cell. Proteomics">
        <title>A multidimensional chromatography technology for in-depth phosphoproteome analysis.</title>
        <authorList>
            <person name="Albuquerque C.P."/>
            <person name="Smolka M.B."/>
            <person name="Payne S.H."/>
            <person name="Bafna V."/>
            <person name="Eng J."/>
            <person name="Zhou H."/>
        </authorList>
    </citation>
    <scope>PHOSPHORYLATION [LARGE SCALE ANALYSIS] AT SER-670</scope>
    <scope>IDENTIFICATION BY MASS SPECTROMETRY [LARGE SCALE ANALYSIS]</scope>
</reference>
<reference key="14">
    <citation type="journal article" date="2009" name="Science">
        <title>Global analysis of Cdk1 substrate phosphorylation sites provides insights into evolution.</title>
        <authorList>
            <person name="Holt L.J."/>
            <person name="Tuch B.B."/>
            <person name="Villen J."/>
            <person name="Johnson A.D."/>
            <person name="Gygi S.P."/>
            <person name="Morgan D.O."/>
        </authorList>
    </citation>
    <scope>IDENTIFICATION BY MASS SPECTROMETRY [LARGE SCALE ANALYSIS]</scope>
</reference>
<keyword id="KW-0103">Bromodomain</keyword>
<keyword id="KW-0156">Chromatin regulator</keyword>
<keyword id="KW-0903">Direct protein sequencing</keyword>
<keyword id="KW-0539">Nucleus</keyword>
<keyword id="KW-0597">Phosphoprotein</keyword>
<keyword id="KW-1185">Reference proteome</keyword>
<keyword id="KW-0677">Repeat</keyword>
<keyword id="KW-0749">Sporulation</keyword>
<keyword id="KW-0804">Transcription</keyword>
<keyword id="KW-0805">Transcription regulation</keyword>
<sequence>MVEQDNGFLQKLLKTQYDAVFHLKDENGIEIYPIFNVLPPKKEYPDYYIIIRNPISLNTLKKRLPHYTSPQDFVNDFAQIPWNAMTYNAKDSVIYKYAILLESFIKGKIVHNIRKHYPEVTYPSLGRIPEIFAESMQPSDLSSNPINTQENDEKAGLNPEMKMAFAKLDSSITERKPTNQDYRMQQKNSPAFPTHSASITPQPLASPTPVVNYANITSAHPKTHVRRGRPPVIDLPYVLRIKNILKMMRREVDQNNKTLTLCFEKLPDRNEEPTYYSVITDPICLMDIRKKVKSRKYRNFHTFEEDFQLMLTNFKLYYSQDQSNIIRAQLLEKNFNRLVRIELSKPDEDYLPEGELRYPLDDVEINDEKYQIGDWVLLHNPNDINKPIVGQIFRLWSTTDGNKWLNACWYFRPEQTVHRVDRLFYKNEVMKTGQYRDHPIQDIKGKCYVIHFTRFQRGDPSTKVNGPQFVCEFRYNESDKVFNKIRTWKACLPEELRDQDEPTIPVNGRKFFKYPSPIADLLPANATLNDKVPEPTEGAPTAPPLVGAVYLGPKLERDDLGEYSTSDDCPRYIIRPNDPPEEGKIDYETGTIITDTLTTSSMPRVNSSSTIRLPTLKQTKSIPSSNFRSSSNTPLLHQNFNQTSNFLKLENMNNSSHNLLSHPSVPKFQSPSLLEQSSRSKYHSAKKQTQLSSTAPKKPASKSFTLSSMINTLTAHTSKYNFNHIVIEAPGAFVVPVPMEKNIRTIQSTERFSRSNLKNAQNLGNTAINDINTANEQIIWFKGPGVKITERVIDSGNDLVRVPLNRWFCKNKRRKLDYEDIEEDVMEPPNDFSEDMIANIFNPPPSLNLDMDLNLSPSSNNSSNFMDLSTIASGDNDGKECDTAEESEDENEDTEDEHEIEDIPTTSAFGLNSSAEYLAFRLREFNKL</sequence>
<proteinExistence type="evidence at protein level"/>
<feature type="chain" id="PRO_0000211211" description="Chromatin structure-remodeling complex subunit RSC1">
    <location>
        <begin position="1"/>
        <end position="928"/>
    </location>
</feature>
<feature type="domain" description="Bromo 1" evidence="1">
    <location>
        <begin position="4"/>
        <end position="112"/>
    </location>
</feature>
<feature type="domain" description="Bromo 2" evidence="1">
    <location>
        <begin position="240"/>
        <end position="342"/>
    </location>
</feature>
<feature type="domain" description="BAH" evidence="2">
    <location>
        <begin position="368"/>
        <end position="486"/>
    </location>
</feature>
<feature type="region of interest" description="Disordered" evidence="3">
    <location>
        <begin position="558"/>
        <end position="586"/>
    </location>
</feature>
<feature type="region of interest" description="Disordered" evidence="3">
    <location>
        <begin position="598"/>
        <end position="635"/>
    </location>
</feature>
<feature type="region of interest" description="Disordered" evidence="3">
    <location>
        <begin position="657"/>
        <end position="701"/>
    </location>
</feature>
<feature type="region of interest" description="Disordered" evidence="3">
    <location>
        <begin position="871"/>
        <end position="908"/>
    </location>
</feature>
<feature type="compositionally biased region" description="Polar residues" evidence="3">
    <location>
        <begin position="600"/>
        <end position="620"/>
    </location>
</feature>
<feature type="compositionally biased region" description="Low complexity" evidence="3">
    <location>
        <begin position="621"/>
        <end position="631"/>
    </location>
</feature>
<feature type="compositionally biased region" description="Polar residues" evidence="3">
    <location>
        <begin position="667"/>
        <end position="679"/>
    </location>
</feature>
<feature type="compositionally biased region" description="Low complexity" evidence="3">
    <location>
        <begin position="692"/>
        <end position="701"/>
    </location>
</feature>
<feature type="compositionally biased region" description="Acidic residues" evidence="3">
    <location>
        <begin position="883"/>
        <end position="902"/>
    </location>
</feature>
<feature type="modified residue" description="Phosphoserine" evidence="14">
    <location>
        <position position="670"/>
    </location>
</feature>
<feature type="mutagenesis site" description="Loss of function." evidence="6">
    <original>GRP</original>
    <variation>AAA</variation>
    <location>
        <begin position="228"/>
        <end position="230"/>
    </location>
</feature>
<feature type="sequence conflict" description="In Ref. 1; AAZ22469." evidence="13" ref="1">
    <original>N</original>
    <variation>H</variation>
    <location>
        <position position="112"/>
    </location>
</feature>
<feature type="sequence conflict" description="In Ref. 1; AAZ22469." evidence="13" ref="1">
    <original>T</original>
    <variation>S</variation>
    <location>
        <position position="302"/>
    </location>
</feature>
<feature type="sequence conflict" description="In Ref. 4; AA sequence." evidence="13" ref="4">
    <original>D</original>
    <variation>H</variation>
    <location>
        <position position="520"/>
    </location>
</feature>
<feature type="sequence conflict" description="In Ref. 1; AAZ22469." evidence="13" ref="1">
    <original>T</original>
    <variation>S</variation>
    <location>
        <position position="712"/>
    </location>
</feature>
<feature type="sequence conflict" description="In Ref. 1; AAZ22469." evidence="13" ref="1">
    <original>D</original>
    <variation>E</variation>
    <location>
        <position position="820"/>
    </location>
</feature>
<comment type="function">
    <text evidence="4 5 7 8 9 10 12">Component of the chromatin structure remodeling complex (RSC), which is involved in transcription regulation and nucleosome positioning. RSC is responsible for the transfer of a histone octamer from a nucleosome core particle to naked DNA. The reaction requires ATP and involves an activated RSC-nucleosome intermediate. Remodeling reaction also involves DNA translocation, DNA twist and conformational change. As a reconfigurer of centromeric and flanking nucleosomes, RSC complex is required both for proper kinetochore function in chromosome segregation and, via a PKC1-dependent signaling pathway, for organization of the cellular cytoskeleton. This subunit is involved in meiotic sporulation through regulating IME2 expression.</text>
</comment>
<comment type="subunit">
    <text>Component of the two forms of the RSC complex composed of at least either RSC1 or RSC2, and ARP7, ARP9, LDB7, NPL6, RSC3, RSC30, RSC4, RSC58, RSC6, RSC8, RSC9, SFH1, STH1, HTL1 and probably RTT102. The complexes interact with histone and histone variant components of centromeric chromatin.</text>
</comment>
<comment type="subcellular location">
    <subcellularLocation>
        <location evidence="9">Nucleus</location>
    </subcellularLocation>
    <text>Localizes to centromeric and flanking chromatin. Association with these loci is dependent on STH1.</text>
</comment>
<comment type="miscellaneous">
    <text evidence="11">Present with 259 molecules/cell in log phase SD medium.</text>
</comment>
<comment type="similarity">
    <text evidence="13">Belongs to the RSC1 family.</text>
</comment>
<accession>P53236</accession>
<accession>D6VUJ1</accession>
<accession>Q45U30</accession>
<gene>
    <name type="primary">RSC1</name>
    <name type="ordered locus">YGR056W</name>
</gene>
<dbReference type="EMBL" id="DQ115391">
    <property type="protein sequence ID" value="AAZ22469.1"/>
    <property type="molecule type" value="Genomic_DNA"/>
</dbReference>
<dbReference type="EMBL" id="Z72841">
    <property type="protein sequence ID" value="CAA97057.1"/>
    <property type="molecule type" value="Genomic_DNA"/>
</dbReference>
<dbReference type="EMBL" id="BK006941">
    <property type="protein sequence ID" value="DAA08152.1"/>
    <property type="molecule type" value="Genomic_DNA"/>
</dbReference>
<dbReference type="PIR" id="S64350">
    <property type="entry name" value="S64350"/>
</dbReference>
<dbReference type="RefSeq" id="NP_011570.1">
    <property type="nucleotide sequence ID" value="NM_001181185.1"/>
</dbReference>
<dbReference type="SMR" id="P53236"/>
<dbReference type="BioGRID" id="33301">
    <property type="interactions" value="302"/>
</dbReference>
<dbReference type="ComplexPortal" id="CPX-1889">
    <property type="entry name" value="RSC chromatin remodelling complex, variant RSC1"/>
</dbReference>
<dbReference type="DIP" id="DIP-984N"/>
<dbReference type="FunCoup" id="P53236">
    <property type="interactions" value="271"/>
</dbReference>
<dbReference type="IntAct" id="P53236">
    <property type="interactions" value="28"/>
</dbReference>
<dbReference type="MINT" id="P53236"/>
<dbReference type="STRING" id="4932.YGR056W"/>
<dbReference type="GlyGen" id="P53236">
    <property type="glycosylation" value="1 site"/>
</dbReference>
<dbReference type="iPTMnet" id="P53236"/>
<dbReference type="PaxDb" id="4932-YGR056W"/>
<dbReference type="PeptideAtlas" id="P53236"/>
<dbReference type="EnsemblFungi" id="YGR056W_mRNA">
    <property type="protein sequence ID" value="YGR056W"/>
    <property type="gene ID" value="YGR056W"/>
</dbReference>
<dbReference type="GeneID" id="852947"/>
<dbReference type="KEGG" id="sce:YGR056W"/>
<dbReference type="AGR" id="SGD:S000003288"/>
<dbReference type="SGD" id="S000003288">
    <property type="gene designation" value="RSC1"/>
</dbReference>
<dbReference type="VEuPathDB" id="FungiDB:YGR056W"/>
<dbReference type="eggNOG" id="KOG1827">
    <property type="taxonomic scope" value="Eukaryota"/>
</dbReference>
<dbReference type="GeneTree" id="ENSGT00940000176545"/>
<dbReference type="HOGENOM" id="CLU_007728_2_0_1"/>
<dbReference type="InParanoid" id="P53236"/>
<dbReference type="OMA" id="RLPHYTS"/>
<dbReference type="OrthoDB" id="1742084at2759"/>
<dbReference type="BioCyc" id="YEAST:G3O-30773-MONOMER"/>
<dbReference type="BioGRID-ORCS" id="852947">
    <property type="hits" value="0 hits in 10 CRISPR screens"/>
</dbReference>
<dbReference type="PRO" id="PR:P53236"/>
<dbReference type="Proteomes" id="UP000002311">
    <property type="component" value="Chromosome VII"/>
</dbReference>
<dbReference type="RNAct" id="P53236">
    <property type="molecule type" value="protein"/>
</dbReference>
<dbReference type="GO" id="GO:0000785">
    <property type="term" value="C:chromatin"/>
    <property type="evidence" value="ECO:0000303"/>
    <property type="project" value="ComplexPortal"/>
</dbReference>
<dbReference type="GO" id="GO:0016586">
    <property type="term" value="C:RSC-type complex"/>
    <property type="evidence" value="ECO:0000314"/>
    <property type="project" value="UniProtKB"/>
</dbReference>
<dbReference type="GO" id="GO:0003682">
    <property type="term" value="F:chromatin binding"/>
    <property type="evidence" value="ECO:0000318"/>
    <property type="project" value="GO_Central"/>
</dbReference>
<dbReference type="GO" id="GO:0006338">
    <property type="term" value="P:chromatin remodeling"/>
    <property type="evidence" value="ECO:0000318"/>
    <property type="project" value="GO_Central"/>
</dbReference>
<dbReference type="GO" id="GO:0006302">
    <property type="term" value="P:double-strand break repair"/>
    <property type="evidence" value="ECO:0000315"/>
    <property type="project" value="SGD"/>
</dbReference>
<dbReference type="GO" id="GO:0006303">
    <property type="term" value="P:double-strand break repair via nonhomologous end joining"/>
    <property type="evidence" value="ECO:0000353"/>
    <property type="project" value="SGD"/>
</dbReference>
<dbReference type="GO" id="GO:0006337">
    <property type="term" value="P:nucleosome disassembly"/>
    <property type="evidence" value="ECO:0000314"/>
    <property type="project" value="SGD"/>
</dbReference>
<dbReference type="GO" id="GO:0042173">
    <property type="term" value="P:regulation of sporulation resulting in formation of a cellular spore"/>
    <property type="evidence" value="ECO:0000315"/>
    <property type="project" value="UniProtKB"/>
</dbReference>
<dbReference type="GO" id="GO:0030435">
    <property type="term" value="P:sporulation resulting in formation of a cellular spore"/>
    <property type="evidence" value="ECO:0007669"/>
    <property type="project" value="UniProtKB-KW"/>
</dbReference>
<dbReference type="GO" id="GO:0006368">
    <property type="term" value="P:transcription elongation by RNA polymerase II"/>
    <property type="evidence" value="ECO:0000314"/>
    <property type="project" value="SGD"/>
</dbReference>
<dbReference type="CDD" id="cd04717">
    <property type="entry name" value="BAH_polybromo"/>
    <property type="match status" value="1"/>
</dbReference>
<dbReference type="CDD" id="cd05521">
    <property type="entry name" value="Bromo_Rsc1_2_I"/>
    <property type="match status" value="1"/>
</dbReference>
<dbReference type="CDD" id="cd05522">
    <property type="entry name" value="Bromo_Rsc1_2_II"/>
    <property type="match status" value="1"/>
</dbReference>
<dbReference type="FunFam" id="1.20.920.10:FF:000042">
    <property type="entry name" value="RSC complex member"/>
    <property type="match status" value="1"/>
</dbReference>
<dbReference type="FunFam" id="1.20.920.10:FF:000049">
    <property type="entry name" value="RSC complex member"/>
    <property type="match status" value="1"/>
</dbReference>
<dbReference type="FunFam" id="2.30.30.490:FF:000016">
    <property type="entry name" value="RSC complex member"/>
    <property type="match status" value="1"/>
</dbReference>
<dbReference type="Gene3D" id="2.30.30.490">
    <property type="match status" value="1"/>
</dbReference>
<dbReference type="Gene3D" id="1.20.920.10">
    <property type="entry name" value="Bromodomain-like"/>
    <property type="match status" value="2"/>
</dbReference>
<dbReference type="InterPro" id="IPR001025">
    <property type="entry name" value="BAH_dom"/>
</dbReference>
<dbReference type="InterPro" id="IPR043151">
    <property type="entry name" value="BAH_sf"/>
</dbReference>
<dbReference type="InterPro" id="IPR001487">
    <property type="entry name" value="Bromodomain"/>
</dbReference>
<dbReference type="InterPro" id="IPR036427">
    <property type="entry name" value="Bromodomain-like_sf"/>
</dbReference>
<dbReference type="InterPro" id="IPR018359">
    <property type="entry name" value="Bromodomain_CS"/>
</dbReference>
<dbReference type="InterPro" id="IPR037382">
    <property type="entry name" value="Rsc/polybromo"/>
</dbReference>
<dbReference type="InterPro" id="IPR048047">
    <property type="entry name" value="RSC1/2_bromodom"/>
</dbReference>
<dbReference type="InterPro" id="IPR035700">
    <property type="entry name" value="Rsc1/Rsc2_Bromo"/>
</dbReference>
<dbReference type="PANTHER" id="PTHR16062:SF21">
    <property type="entry name" value="CHROMATIN STRUCTURE-REMODELING COMPLEX SUBUNIT RSC1-RELATED"/>
    <property type="match status" value="1"/>
</dbReference>
<dbReference type="PANTHER" id="PTHR16062">
    <property type="entry name" value="SWI/SNF-RELATED"/>
    <property type="match status" value="1"/>
</dbReference>
<dbReference type="Pfam" id="PF01426">
    <property type="entry name" value="BAH"/>
    <property type="match status" value="1"/>
</dbReference>
<dbReference type="Pfam" id="PF00439">
    <property type="entry name" value="Bromodomain"/>
    <property type="match status" value="2"/>
</dbReference>
<dbReference type="PRINTS" id="PR00503">
    <property type="entry name" value="BROMODOMAIN"/>
</dbReference>
<dbReference type="SMART" id="SM00439">
    <property type="entry name" value="BAH"/>
    <property type="match status" value="1"/>
</dbReference>
<dbReference type="SMART" id="SM00297">
    <property type="entry name" value="BROMO"/>
    <property type="match status" value="2"/>
</dbReference>
<dbReference type="SUPFAM" id="SSF47370">
    <property type="entry name" value="Bromodomain"/>
    <property type="match status" value="2"/>
</dbReference>
<dbReference type="PROSITE" id="PS51038">
    <property type="entry name" value="BAH"/>
    <property type="match status" value="1"/>
</dbReference>
<dbReference type="PROSITE" id="PS00633">
    <property type="entry name" value="BROMODOMAIN_1"/>
    <property type="match status" value="1"/>
</dbReference>
<dbReference type="PROSITE" id="PS50014">
    <property type="entry name" value="BROMODOMAIN_2"/>
    <property type="match status" value="2"/>
</dbReference>
<evidence type="ECO:0000255" key="1">
    <source>
        <dbReference type="PROSITE-ProRule" id="PRU00035"/>
    </source>
</evidence>
<evidence type="ECO:0000255" key="2">
    <source>
        <dbReference type="PROSITE-ProRule" id="PRU00370"/>
    </source>
</evidence>
<evidence type="ECO:0000256" key="3">
    <source>
        <dbReference type="SAM" id="MobiDB-lite"/>
    </source>
</evidence>
<evidence type="ECO:0000269" key="4">
    <source>
    </source>
</evidence>
<evidence type="ECO:0000269" key="5">
    <source>
    </source>
</evidence>
<evidence type="ECO:0000269" key="6">
    <source>
    </source>
</evidence>
<evidence type="ECO:0000269" key="7">
    <source>
    </source>
</evidence>
<evidence type="ECO:0000269" key="8">
    <source>
    </source>
</evidence>
<evidence type="ECO:0000269" key="9">
    <source>
    </source>
</evidence>
<evidence type="ECO:0000269" key="10">
    <source>
    </source>
</evidence>
<evidence type="ECO:0000269" key="11">
    <source>
    </source>
</evidence>
<evidence type="ECO:0000269" key="12">
    <source>
    </source>
</evidence>
<evidence type="ECO:0000305" key="13"/>
<evidence type="ECO:0007744" key="14">
    <source>
    </source>
</evidence>
<name>RSC1_YEAST</name>